<sequence>MSYTHILVAVAVTPESHQLLAKAVSIARPVQAKVSLITLASDPELYNQFAAPMMEDLRAVMHEETENFLKMLGEKADYPIEQTFIASGELSQHILAVCRKHHVDLVICGNHNHSFFSRASCSAKVSSAPAR</sequence>
<comment type="function">
    <text evidence="1">Required for resistance to DNA-damaging agents.</text>
</comment>
<comment type="subcellular location">
    <subcellularLocation>
        <location evidence="1">Cytoplasm</location>
    </subcellularLocation>
</comment>
<comment type="similarity">
    <text evidence="2">Belongs to the universal stress protein A family.</text>
</comment>
<organism>
    <name type="scientific">Salmonella typhi</name>
    <dbReference type="NCBI Taxonomy" id="90370"/>
    <lineage>
        <taxon>Bacteria</taxon>
        <taxon>Pseudomonadati</taxon>
        <taxon>Pseudomonadota</taxon>
        <taxon>Gammaproteobacteria</taxon>
        <taxon>Enterobacterales</taxon>
        <taxon>Enterobacteriaceae</taxon>
        <taxon>Salmonella</taxon>
    </lineage>
</organism>
<reference key="1">
    <citation type="journal article" date="2001" name="Nature">
        <title>Complete genome sequence of a multiple drug resistant Salmonella enterica serovar Typhi CT18.</title>
        <authorList>
            <person name="Parkhill J."/>
            <person name="Dougan G."/>
            <person name="James K.D."/>
            <person name="Thomson N.R."/>
            <person name="Pickard D."/>
            <person name="Wain J."/>
            <person name="Churcher C.M."/>
            <person name="Mungall K.L."/>
            <person name="Bentley S.D."/>
            <person name="Holden M.T.G."/>
            <person name="Sebaihia M."/>
            <person name="Baker S."/>
            <person name="Basham D."/>
            <person name="Brooks K."/>
            <person name="Chillingworth T."/>
            <person name="Connerton P."/>
            <person name="Cronin A."/>
            <person name="Davis P."/>
            <person name="Davies R.M."/>
            <person name="Dowd L."/>
            <person name="White N."/>
            <person name="Farrar J."/>
            <person name="Feltwell T."/>
            <person name="Hamlin N."/>
            <person name="Haque A."/>
            <person name="Hien T.T."/>
            <person name="Holroyd S."/>
            <person name="Jagels K."/>
            <person name="Krogh A."/>
            <person name="Larsen T.S."/>
            <person name="Leather S."/>
            <person name="Moule S."/>
            <person name="O'Gaora P."/>
            <person name="Parry C."/>
            <person name="Quail M.A."/>
            <person name="Rutherford K.M."/>
            <person name="Simmonds M."/>
            <person name="Skelton J."/>
            <person name="Stevens K."/>
            <person name="Whitehead S."/>
            <person name="Barrell B.G."/>
        </authorList>
    </citation>
    <scope>NUCLEOTIDE SEQUENCE [LARGE SCALE GENOMIC DNA]</scope>
    <source>
        <strain>CT18</strain>
    </source>
</reference>
<reference key="2">
    <citation type="journal article" date="2003" name="J. Bacteriol.">
        <title>Comparative genomics of Salmonella enterica serovar Typhi strains Ty2 and CT18.</title>
        <authorList>
            <person name="Deng W."/>
            <person name="Liou S.-R."/>
            <person name="Plunkett G. III"/>
            <person name="Mayhew G.F."/>
            <person name="Rose D.J."/>
            <person name="Burland V."/>
            <person name="Kodoyianni V."/>
            <person name="Schwartz D.C."/>
            <person name="Blattner F.R."/>
        </authorList>
    </citation>
    <scope>NUCLEOTIDE SEQUENCE [LARGE SCALE GENOMIC DNA]</scope>
    <source>
        <strain>ATCC 700931 / Ty2</strain>
    </source>
</reference>
<dbReference type="EMBL" id="AL513382">
    <property type="protein sequence ID" value="CAD05678.1"/>
    <property type="molecule type" value="Genomic_DNA"/>
</dbReference>
<dbReference type="EMBL" id="AE014613">
    <property type="protein sequence ID" value="AAO68623.1"/>
    <property type="molecule type" value="Genomic_DNA"/>
</dbReference>
<dbReference type="SMR" id="Q8Z5U4"/>
<dbReference type="STRING" id="220341.gene:17586043"/>
<dbReference type="KEGG" id="stt:t0950"/>
<dbReference type="KEGG" id="sty:STY2136"/>
<dbReference type="PATRIC" id="fig|90370.929.peg.63"/>
<dbReference type="eggNOG" id="COG0589">
    <property type="taxonomic scope" value="Bacteria"/>
</dbReference>
<dbReference type="HOGENOM" id="CLU_049301_18_1_6"/>
<dbReference type="OMA" id="CGNHNQS"/>
<dbReference type="Proteomes" id="UP000000541">
    <property type="component" value="Chromosome"/>
</dbReference>
<dbReference type="Proteomes" id="UP000002670">
    <property type="component" value="Chromosome"/>
</dbReference>
<dbReference type="GO" id="GO:0005737">
    <property type="term" value="C:cytoplasm"/>
    <property type="evidence" value="ECO:0007669"/>
    <property type="project" value="UniProtKB-SubCell"/>
</dbReference>
<dbReference type="Gene3D" id="3.40.50.620">
    <property type="entry name" value="HUPs"/>
    <property type="match status" value="1"/>
</dbReference>
<dbReference type="InterPro" id="IPR014729">
    <property type="entry name" value="Rossmann-like_a/b/a_fold"/>
</dbReference>
<dbReference type="InterPro" id="IPR006015">
    <property type="entry name" value="Universal_stress_UspA"/>
</dbReference>
<dbReference type="InterPro" id="IPR006016">
    <property type="entry name" value="UspA"/>
</dbReference>
<dbReference type="NCBIfam" id="NF007512">
    <property type="entry name" value="PRK10116.1"/>
    <property type="match status" value="1"/>
</dbReference>
<dbReference type="PANTHER" id="PTHR46268">
    <property type="entry name" value="STRESS RESPONSE PROTEIN NHAX"/>
    <property type="match status" value="1"/>
</dbReference>
<dbReference type="PANTHER" id="PTHR46268:SF16">
    <property type="entry name" value="UNIVERSAL STRESS PROTEIN C"/>
    <property type="match status" value="1"/>
</dbReference>
<dbReference type="Pfam" id="PF00582">
    <property type="entry name" value="Usp"/>
    <property type="match status" value="1"/>
</dbReference>
<dbReference type="PIRSF" id="PIRSF006276">
    <property type="entry name" value="UspA"/>
    <property type="match status" value="1"/>
</dbReference>
<dbReference type="SUPFAM" id="SSF52402">
    <property type="entry name" value="Adenine nucleotide alpha hydrolases-like"/>
    <property type="match status" value="1"/>
</dbReference>
<gene>
    <name type="primary">uspC</name>
    <name type="ordered locus">STY2136</name>
    <name type="ordered locus">t0950</name>
</gene>
<proteinExistence type="inferred from homology"/>
<protein>
    <recommendedName>
        <fullName>Universal stress protein C</fullName>
    </recommendedName>
</protein>
<name>USPC_SALTI</name>
<evidence type="ECO:0000250" key="1"/>
<evidence type="ECO:0000305" key="2"/>
<accession>Q8Z5U4</accession>
<feature type="chain" id="PRO_0000147411" description="Universal stress protein C">
    <location>
        <begin position="1"/>
        <end position="131"/>
    </location>
</feature>
<keyword id="KW-0963">Cytoplasm</keyword>